<comment type="function">
    <text evidence="1">Acts as a component of the mcm2-7 complex (mcm complex) which is the putative replicative helicase essential for 'once per cell cycle' DNA replication initiation and elongation in eukaryotic cells. The active ATPase sites in the mcm2-7 ring are formed through the interaction surfaces of two neighboring subunits such that a critical structure of a conserved arginine finger motif is provided in trans relative to the ATP-binding site of the Walker A box of the adjacent subunit. The six ATPase active sites, however, are likely to contribute differentially to the complex helicase activity. The existence of maternal and zygotic forms of mcm3 and mcm6 suggests that specific forms of mcm2-7 complexes may be used during different stages of development (By similarity).</text>
</comment>
<comment type="catalytic activity">
    <reaction evidence="2">
        <text>ATP + H2O = ADP + phosphate + H(+)</text>
        <dbReference type="Rhea" id="RHEA:13065"/>
        <dbReference type="ChEBI" id="CHEBI:15377"/>
        <dbReference type="ChEBI" id="CHEBI:15378"/>
        <dbReference type="ChEBI" id="CHEBI:30616"/>
        <dbReference type="ChEBI" id="CHEBI:43474"/>
        <dbReference type="ChEBI" id="CHEBI:456216"/>
        <dbReference type="EC" id="3.6.4.12"/>
    </reaction>
    <physiologicalReaction direction="left-to-right" evidence="2">
        <dbReference type="Rhea" id="RHEA:13066"/>
    </physiologicalReaction>
</comment>
<comment type="subunit">
    <text evidence="1">Component of the mcm2-7 complex (RLF-M) (By similarity). The complex forms a toroidal hexameric ring with the proposed subunit order mcm2-mcm6-mcm4-mcm7-mcm3-mcm5 (By similarity). The heterodimer of mmcm3/mcm5 interacts with mcm4, mmcm6, mcm7 and weakly with mcm2 (By similarity). The N-terminus is required for interaction with mmcm3, though this interaction may not be direct, and remains in a complex with mmcm3 throughout the cell cycle (By similarity). Begins to associate with zmcm6 at the neurula stage (By similarity). Component of the replisome complex (By similarity). Component of the CMG helicase complex, composed of the mcm2-7 complex, the GINS complex and cdc45 (By similarity).</text>
</comment>
<comment type="subcellular location">
    <subcellularLocation>
        <location evidence="3">Nucleus</location>
    </subcellularLocation>
    <subcellularLocation>
        <location evidence="3">Chromosome</location>
    </subcellularLocation>
    <text evidence="3">Associated with chromatin before the formation of nuclei and detaches from it as DNA replication progresses.</text>
</comment>
<comment type="PTM">
    <text evidence="1">Ubiquitinated by traip when forks converge following formation of DNA interstrand cross-links (By similarity). Short ubiquitin chains on mcm7 promote recruitment of DNA glycosylase neil3 (By similarity). If the interstrand cross-link cannot be cleaved by neil3, the ubiquitin chains continue to grow on mcm7, promoting the unloading of the CMG helicase complex by the vcp/p97 ATPase (By similarity).</text>
</comment>
<comment type="miscellaneous">
    <text evidence="2">Early fractionation of eukaryotic MCM proteins yielded a variety of dimeric, trimeric and tetrameric complexes with unclear biological significance. Specifically a MCM467 subcomplex is shown to have in vitro helicase activity which is inhibited by the MCM2 subunit. The MCM2-7 hexamer is the proposed physiological active complex.</text>
</comment>
<comment type="similarity">
    <text evidence="4">Belongs to the MCM family.</text>
</comment>
<organism>
    <name type="scientific">Xenopus laevis</name>
    <name type="common">African clawed frog</name>
    <dbReference type="NCBI Taxonomy" id="8355"/>
    <lineage>
        <taxon>Eukaryota</taxon>
        <taxon>Metazoa</taxon>
        <taxon>Chordata</taxon>
        <taxon>Craniata</taxon>
        <taxon>Vertebrata</taxon>
        <taxon>Euteleostomi</taxon>
        <taxon>Amphibia</taxon>
        <taxon>Batrachia</taxon>
        <taxon>Anura</taxon>
        <taxon>Pipoidea</taxon>
        <taxon>Pipidae</taxon>
        <taxon>Xenopodinae</taxon>
        <taxon>Xenopus</taxon>
        <taxon>Xenopus</taxon>
    </lineage>
</organism>
<protein>
    <recommendedName>
        <fullName>DNA replication licensing factor mcm7-B</fullName>
        <ecNumber evidence="2">3.6.4.12</ecNumber>
    </recommendedName>
    <alternativeName>
        <fullName>CDC47 homolog B</fullName>
    </alternativeName>
    <alternativeName>
        <fullName>CDC47-2p</fullName>
    </alternativeName>
    <alternativeName>
        <fullName>Minichromosome maintenance protein 7-B</fullName>
        <shortName>xMCM7-B</shortName>
    </alternativeName>
</protein>
<accession>Q7ZXB1</accession>
<accession>O42592</accession>
<dbReference type="EC" id="3.6.4.12" evidence="2"/>
<dbReference type="EMBL" id="U66710">
    <property type="protein sequence ID" value="AAC60228.1"/>
    <property type="molecule type" value="mRNA"/>
</dbReference>
<dbReference type="EMBL" id="BC045072">
    <property type="protein sequence ID" value="AAH45072.1"/>
    <property type="molecule type" value="mRNA"/>
</dbReference>
<dbReference type="RefSeq" id="NP_001080722.1">
    <property type="nucleotide sequence ID" value="NM_001087253.1"/>
</dbReference>
<dbReference type="PDB" id="8Q6O">
    <property type="method" value="EM"/>
    <property type="resolution" value="3.14 A"/>
    <property type="chains" value="7/F=1-720"/>
</dbReference>
<dbReference type="PDB" id="8Q6P">
    <property type="method" value="EM"/>
    <property type="resolution" value="3.53 A"/>
    <property type="chains" value="7=1-720"/>
</dbReference>
<dbReference type="PDBsum" id="8Q6O"/>
<dbReference type="PDBsum" id="8Q6P"/>
<dbReference type="EMDB" id="EMD-18191"/>
<dbReference type="EMDB" id="EMD-18192"/>
<dbReference type="EMDB" id="EMD-18195"/>
<dbReference type="SMR" id="Q7ZXB1"/>
<dbReference type="BioGRID" id="98656">
    <property type="interactions" value="6"/>
</dbReference>
<dbReference type="IntAct" id="Q7ZXB1">
    <property type="interactions" value="1"/>
</dbReference>
<dbReference type="DNASU" id="380414"/>
<dbReference type="GeneID" id="380414"/>
<dbReference type="KEGG" id="xla:380414"/>
<dbReference type="AGR" id="Xenbase:XB-GENE-6256533"/>
<dbReference type="CTD" id="380414"/>
<dbReference type="Xenbase" id="XB-GENE-6256533">
    <property type="gene designation" value="mcm7.L"/>
</dbReference>
<dbReference type="OMA" id="AQHVTYV"/>
<dbReference type="OrthoDB" id="3207464at2759"/>
<dbReference type="Proteomes" id="UP000186698">
    <property type="component" value="Chromosome 3L"/>
</dbReference>
<dbReference type="Bgee" id="380414">
    <property type="expression patterns" value="Expressed in egg cell and 19 other cell types or tissues"/>
</dbReference>
<dbReference type="GO" id="GO:0000785">
    <property type="term" value="C:chromatin"/>
    <property type="evidence" value="ECO:0000314"/>
    <property type="project" value="UniProtKB"/>
</dbReference>
<dbReference type="GO" id="GO:0071162">
    <property type="term" value="C:CMG complex"/>
    <property type="evidence" value="ECO:0000250"/>
    <property type="project" value="UniProtKB"/>
</dbReference>
<dbReference type="GO" id="GO:0042555">
    <property type="term" value="C:MCM complex"/>
    <property type="evidence" value="ECO:0000314"/>
    <property type="project" value="UniProtKB"/>
</dbReference>
<dbReference type="GO" id="GO:0005634">
    <property type="term" value="C:nucleus"/>
    <property type="evidence" value="ECO:0000318"/>
    <property type="project" value="GO_Central"/>
</dbReference>
<dbReference type="GO" id="GO:0005524">
    <property type="term" value="F:ATP binding"/>
    <property type="evidence" value="ECO:0007669"/>
    <property type="project" value="UniProtKB-KW"/>
</dbReference>
<dbReference type="GO" id="GO:0016887">
    <property type="term" value="F:ATP hydrolysis activity"/>
    <property type="evidence" value="ECO:0007669"/>
    <property type="project" value="InterPro"/>
</dbReference>
<dbReference type="GO" id="GO:0003697">
    <property type="term" value="F:single-stranded DNA binding"/>
    <property type="evidence" value="ECO:0000318"/>
    <property type="project" value="GO_Central"/>
</dbReference>
<dbReference type="GO" id="GO:0017116">
    <property type="term" value="F:single-stranded DNA helicase activity"/>
    <property type="evidence" value="ECO:0007669"/>
    <property type="project" value="TreeGrafter"/>
</dbReference>
<dbReference type="GO" id="GO:0008270">
    <property type="term" value="F:zinc ion binding"/>
    <property type="evidence" value="ECO:0007669"/>
    <property type="project" value="UniProtKB-KW"/>
</dbReference>
<dbReference type="GO" id="GO:0006260">
    <property type="term" value="P:DNA replication"/>
    <property type="evidence" value="ECO:0000318"/>
    <property type="project" value="GO_Central"/>
</dbReference>
<dbReference type="GO" id="GO:0006270">
    <property type="term" value="P:DNA replication initiation"/>
    <property type="evidence" value="ECO:0000318"/>
    <property type="project" value="GO_Central"/>
</dbReference>
<dbReference type="GO" id="GO:0006271">
    <property type="term" value="P:DNA strand elongation involved in DNA replication"/>
    <property type="evidence" value="ECO:0000318"/>
    <property type="project" value="GO_Central"/>
</dbReference>
<dbReference type="GO" id="GO:0000727">
    <property type="term" value="P:double-strand break repair via break-induced replication"/>
    <property type="evidence" value="ECO:0000318"/>
    <property type="project" value="GO_Central"/>
</dbReference>
<dbReference type="GO" id="GO:0030174">
    <property type="term" value="P:regulation of DNA-templated DNA replication initiation"/>
    <property type="evidence" value="ECO:0000314"/>
    <property type="project" value="UniProtKB"/>
</dbReference>
<dbReference type="CDD" id="cd17758">
    <property type="entry name" value="MCM7"/>
    <property type="match status" value="1"/>
</dbReference>
<dbReference type="FunFam" id="2.20.28.10:FF:000004">
    <property type="entry name" value="DNA replication licensing factor MCM7"/>
    <property type="match status" value="1"/>
</dbReference>
<dbReference type="FunFam" id="3.30.1640.10:FF:000007">
    <property type="entry name" value="DNA replication licensing factor MCM7"/>
    <property type="match status" value="1"/>
</dbReference>
<dbReference type="FunFam" id="3.40.50.300:FF:000288">
    <property type="entry name" value="DNA replication licensing factor MCM7"/>
    <property type="match status" value="1"/>
</dbReference>
<dbReference type="Gene3D" id="2.20.28.10">
    <property type="match status" value="1"/>
</dbReference>
<dbReference type="Gene3D" id="3.30.1640.10">
    <property type="entry name" value="mini-chromosome maintenance (MCM) complex, chain A, domain 1"/>
    <property type="match status" value="1"/>
</dbReference>
<dbReference type="Gene3D" id="2.40.50.140">
    <property type="entry name" value="Nucleic acid-binding proteins"/>
    <property type="match status" value="1"/>
</dbReference>
<dbReference type="Gene3D" id="3.40.50.300">
    <property type="entry name" value="P-loop containing nucleotide triphosphate hydrolases"/>
    <property type="match status" value="1"/>
</dbReference>
<dbReference type="InterPro" id="IPR003593">
    <property type="entry name" value="AAA+_ATPase"/>
</dbReference>
<dbReference type="InterPro" id="IPR031327">
    <property type="entry name" value="MCM"/>
</dbReference>
<dbReference type="InterPro" id="IPR008050">
    <property type="entry name" value="MCM7"/>
</dbReference>
<dbReference type="InterPro" id="IPR018525">
    <property type="entry name" value="MCM_CS"/>
</dbReference>
<dbReference type="InterPro" id="IPR001208">
    <property type="entry name" value="MCM_dom"/>
</dbReference>
<dbReference type="InterPro" id="IPR041562">
    <property type="entry name" value="MCM_lid"/>
</dbReference>
<dbReference type="InterPro" id="IPR027925">
    <property type="entry name" value="MCM_N"/>
</dbReference>
<dbReference type="InterPro" id="IPR033762">
    <property type="entry name" value="MCM_OB"/>
</dbReference>
<dbReference type="InterPro" id="IPR012340">
    <property type="entry name" value="NA-bd_OB-fold"/>
</dbReference>
<dbReference type="InterPro" id="IPR027417">
    <property type="entry name" value="P-loop_NTPase"/>
</dbReference>
<dbReference type="PANTHER" id="PTHR11630">
    <property type="entry name" value="DNA REPLICATION LICENSING FACTOR MCM FAMILY MEMBER"/>
    <property type="match status" value="1"/>
</dbReference>
<dbReference type="PANTHER" id="PTHR11630:SF26">
    <property type="entry name" value="DNA REPLICATION LICENSING FACTOR MCM7"/>
    <property type="match status" value="1"/>
</dbReference>
<dbReference type="Pfam" id="PF24901">
    <property type="entry name" value="HTH_MCM7"/>
    <property type="match status" value="1"/>
</dbReference>
<dbReference type="Pfam" id="PF00493">
    <property type="entry name" value="MCM"/>
    <property type="match status" value="1"/>
</dbReference>
<dbReference type="Pfam" id="PF17855">
    <property type="entry name" value="MCM_lid"/>
    <property type="match status" value="1"/>
</dbReference>
<dbReference type="Pfam" id="PF14551">
    <property type="entry name" value="MCM_N"/>
    <property type="match status" value="1"/>
</dbReference>
<dbReference type="Pfam" id="PF17207">
    <property type="entry name" value="MCM_OB"/>
    <property type="match status" value="1"/>
</dbReference>
<dbReference type="PRINTS" id="PR01657">
    <property type="entry name" value="MCMFAMILY"/>
</dbReference>
<dbReference type="PRINTS" id="PR01663">
    <property type="entry name" value="MCMPROTEIN7"/>
</dbReference>
<dbReference type="SMART" id="SM00382">
    <property type="entry name" value="AAA"/>
    <property type="match status" value="1"/>
</dbReference>
<dbReference type="SMART" id="SM00350">
    <property type="entry name" value="MCM"/>
    <property type="match status" value="1"/>
</dbReference>
<dbReference type="SUPFAM" id="SSF50249">
    <property type="entry name" value="Nucleic acid-binding proteins"/>
    <property type="match status" value="1"/>
</dbReference>
<dbReference type="SUPFAM" id="SSF52540">
    <property type="entry name" value="P-loop containing nucleoside triphosphate hydrolases"/>
    <property type="match status" value="1"/>
</dbReference>
<dbReference type="PROSITE" id="PS00847">
    <property type="entry name" value="MCM_1"/>
    <property type="match status" value="1"/>
</dbReference>
<dbReference type="PROSITE" id="PS50051">
    <property type="entry name" value="MCM_2"/>
    <property type="match status" value="1"/>
</dbReference>
<keyword id="KW-0002">3D-structure</keyword>
<keyword id="KW-0067">ATP-binding</keyword>
<keyword id="KW-0131">Cell cycle</keyword>
<keyword id="KW-0158">Chromosome</keyword>
<keyword id="KW-0235">DNA replication</keyword>
<keyword id="KW-0238">DNA-binding</keyword>
<keyword id="KW-0347">Helicase</keyword>
<keyword id="KW-0378">Hydrolase</keyword>
<keyword id="KW-0479">Metal-binding</keyword>
<keyword id="KW-0547">Nucleotide-binding</keyword>
<keyword id="KW-0539">Nucleus</keyword>
<keyword id="KW-1185">Reference proteome</keyword>
<keyword id="KW-0832">Ubl conjugation</keyword>
<keyword id="KW-0862">Zinc</keyword>
<keyword id="KW-0863">Zinc-finger</keyword>
<gene>
    <name type="primary">mcm7-b</name>
    <name evidence="7" type="synonym">cdc47-2</name>
</gene>
<name>MCM7B_XENLA</name>
<feature type="chain" id="PRO_0000240596" description="DNA replication licensing factor mcm7-B">
    <location>
        <begin position="1"/>
        <end position="720"/>
    </location>
</feature>
<feature type="domain" description="MCM" evidence="4">
    <location>
        <begin position="331"/>
        <end position="537"/>
    </location>
</feature>
<feature type="zinc finger region" description="C4-type" evidence="4">
    <location>
        <begin position="183"/>
        <end position="210"/>
    </location>
</feature>
<feature type="short sequence motif" description="Arginine finger">
    <location>
        <begin position="512"/>
        <end position="515"/>
    </location>
</feature>
<feature type="binding site" evidence="1">
    <location>
        <position position="344"/>
    </location>
    <ligand>
        <name>ATP</name>
        <dbReference type="ChEBI" id="CHEBI:30616"/>
        <label>1</label>
        <note>ligand shared with MCM3</note>
    </ligand>
</feature>
<feature type="binding site" evidence="1">
    <location>
        <position position="383"/>
    </location>
    <ligand>
        <name>ATP</name>
        <dbReference type="ChEBI" id="CHEBI:30616"/>
        <label>1</label>
        <note>ligand shared with MCM3</note>
    </ligand>
</feature>
<feature type="binding site" evidence="1">
    <location>
        <position position="385"/>
    </location>
    <ligand>
        <name>ATP</name>
        <dbReference type="ChEBI" id="CHEBI:30616"/>
        <label>1</label>
        <note>ligand shared with MCM3</note>
    </ligand>
</feature>
<feature type="binding site" evidence="1">
    <location>
        <position position="386"/>
    </location>
    <ligand>
        <name>ATP</name>
        <dbReference type="ChEBI" id="CHEBI:30616"/>
        <label>1</label>
        <note>ligand shared with MCM3</note>
    </ligand>
</feature>
<feature type="binding site" evidence="1">
    <location>
        <position position="387"/>
    </location>
    <ligand>
        <name>ATP</name>
        <dbReference type="ChEBI" id="CHEBI:30616"/>
        <label>1</label>
        <note>ligand shared with MCM3</note>
    </ligand>
</feature>
<feature type="binding site" evidence="1">
    <location>
        <position position="488"/>
    </location>
    <ligand>
        <name>ATP</name>
        <dbReference type="ChEBI" id="CHEBI:30616"/>
        <label>1</label>
        <note>ligand shared with MCM3</note>
    </ligand>
</feature>
<feature type="binding site" evidence="1">
    <location>
        <position position="513"/>
    </location>
    <ligand>
        <name>ATP</name>
        <dbReference type="ChEBI" id="CHEBI:30616"/>
        <label>2</label>
        <note>ligand shared with MCM4</note>
    </ligand>
</feature>
<feature type="binding site" evidence="1">
    <location>
        <position position="603"/>
    </location>
    <ligand>
        <name>ATP</name>
        <dbReference type="ChEBI" id="CHEBI:30616"/>
        <label>2</label>
        <note>ligand shared with MCM4</note>
    </ligand>
</feature>
<feature type="sequence conflict" description="In Ref. 1; AAC60228." evidence="6" ref="1">
    <original>A</original>
    <variation>T</variation>
    <location>
        <position position="46"/>
    </location>
</feature>
<feature type="sequence conflict" description="In Ref. 1; AAC60228." evidence="6" ref="1">
    <original>E</original>
    <variation>Q</variation>
    <location>
        <position position="60"/>
    </location>
</feature>
<feature type="sequence conflict" description="In Ref. 1; AAC60228." evidence="6" ref="1">
    <original>E</original>
    <variation>D</variation>
    <location>
        <position position="309"/>
    </location>
</feature>
<feature type="sequence conflict" description="In Ref. 1; AAC60228." evidence="6" ref="1">
    <original>E</original>
    <variation>Q</variation>
    <location>
        <position position="316"/>
    </location>
</feature>
<feature type="sequence conflict" description="In Ref. 1; AAC60228." evidence="6" ref="1">
    <original>E</original>
    <variation>D</variation>
    <location>
        <position position="328"/>
    </location>
</feature>
<feature type="sequence conflict" description="In Ref. 1; AAC60228." evidence="6" ref="1">
    <original>E</original>
    <variation>D</variation>
    <location>
        <position position="625"/>
    </location>
</feature>
<feature type="sequence conflict" description="In Ref. 1; AAC60228." evidence="6" ref="1">
    <original>E</original>
    <variation>Q</variation>
    <location>
        <position position="670"/>
    </location>
</feature>
<feature type="helix" evidence="9">
    <location>
        <begin position="5"/>
        <end position="17"/>
    </location>
</feature>
<feature type="helix" evidence="9">
    <location>
        <begin position="31"/>
        <end position="40"/>
    </location>
</feature>
<feature type="strand" evidence="9">
    <location>
        <begin position="46"/>
        <end position="50"/>
    </location>
</feature>
<feature type="helix" evidence="9">
    <location>
        <begin position="51"/>
        <end position="57"/>
    </location>
</feature>
<feature type="helix" evidence="9">
    <location>
        <begin position="59"/>
        <end position="67"/>
    </location>
</feature>
<feature type="helix" evidence="9">
    <location>
        <begin position="71"/>
        <end position="83"/>
    </location>
</feature>
<feature type="helix" evidence="9">
    <location>
        <begin position="84"/>
        <end position="87"/>
    </location>
</feature>
<feature type="helix" evidence="9">
    <location>
        <begin position="97"/>
        <end position="110"/>
    </location>
</feature>
<feature type="turn" evidence="9">
    <location>
        <begin position="127"/>
        <end position="130"/>
    </location>
</feature>
<feature type="strand" evidence="9">
    <location>
        <begin position="134"/>
        <end position="138"/>
    </location>
</feature>
<feature type="helix" evidence="9">
    <location>
        <begin position="148"/>
        <end position="150"/>
    </location>
</feature>
<feature type="helix" evidence="9">
    <location>
        <begin position="153"/>
        <end position="155"/>
    </location>
</feature>
<feature type="strand" evidence="9">
    <location>
        <begin position="158"/>
        <end position="169"/>
    </location>
</feature>
<feature type="strand" evidence="9">
    <location>
        <begin position="173"/>
        <end position="182"/>
    </location>
</feature>
<feature type="strand" evidence="9">
    <location>
        <begin position="190"/>
        <end position="193"/>
    </location>
</feature>
<feature type="strand" evidence="9">
    <location>
        <begin position="196"/>
        <end position="199"/>
    </location>
</feature>
<feature type="helix" evidence="9">
    <location>
        <begin position="208"/>
        <end position="212"/>
    </location>
</feature>
<feature type="strand" evidence="9">
    <location>
        <begin position="226"/>
        <end position="237"/>
    </location>
</feature>
<feature type="turn" evidence="9">
    <location>
        <begin position="240"/>
        <end position="242"/>
    </location>
</feature>
<feature type="strand" evidence="9">
    <location>
        <begin position="245"/>
        <end position="247"/>
    </location>
</feature>
<feature type="strand" evidence="9">
    <location>
        <begin position="252"/>
        <end position="257"/>
    </location>
</feature>
<feature type="helix" evidence="9">
    <location>
        <begin position="258"/>
        <end position="260"/>
    </location>
</feature>
<feature type="strand" evidence="9">
    <location>
        <begin position="269"/>
        <end position="279"/>
    </location>
</feature>
<feature type="strand" evidence="9">
    <location>
        <begin position="294"/>
        <end position="303"/>
    </location>
</feature>
<reference evidence="7" key="1">
    <citation type="journal article" date="1997" name="EMBO J.">
        <title>Licensing of DNA replication by a multi-protein complex of MCM/P1 proteins in Xenopus eggs.</title>
        <authorList>
            <person name="Kubota Y."/>
            <person name="Mimura S."/>
            <person name="Nishimoto S."/>
            <person name="Masuda T."/>
            <person name="Nojima H."/>
            <person name="Takisawa H."/>
        </authorList>
    </citation>
    <scope>NUCLEOTIDE SEQUENCE [MRNA]</scope>
    <source>
        <tissue evidence="5">Oocyte</tissue>
    </source>
</reference>
<reference evidence="8" key="2">
    <citation type="submission" date="2003-01" db="EMBL/GenBank/DDBJ databases">
        <authorList>
            <consortium name="NIH - Xenopus Gene Collection (XGC) project"/>
        </authorList>
    </citation>
    <scope>NUCLEOTIDE SEQUENCE [LARGE SCALE MRNA]</scope>
    <source>
        <tissue evidence="8">Embryo</tissue>
    </source>
</reference>
<sequence>MPRDYQAEKEKCKTFLQEFYKDDEFGKKNFKYGVQLANIAHREQVALCIDLDDLAEEDPELVDAICENTRRYTNLFADAVQELLPQYKEREVVHKDALDVYIEHRLMMEQRGRDPNEMRDPHNQYPPELMRRFELYFKAPSSSKARVVRDVKADSIGKLVTVRGIVTRVTEVKPMMVVATYTCDQCGAETYQPIQSPTFMPLIMCPSRECQTNRSGGRLYLQTRGSKFIKFQELKIQEHSDQVPVGNIPRCMSVYVRGENTRLAQPGDHVGITGVFLPMLRTGFRQVVQGLLSETYLESHRLVKMNKTEDDELGTEELSEEELRQITEEDFYEKLAASIAPEIYGHEDVKKALLLLLVGGVDHSPRGMKIRGNINVCLMGDPGVAKSQLLSYIDRLAPRSQYTTGRGSSGVGLTAAVMKDPVTGEMTLEGGALVLADQGVCCIDEFDKMMDSDRTAIHEVMEQQTISIAKAGIMTTLNARCSILAAANPAYGRYNPKKTVEQNIQLPAALLSRFDLLWLIQDKPDRDNDLRLAQHITYVHQHSKQPPSQFQPMDMKLMRRYITMCKSKQPAIPESLADYLTAAYVEMRKEARTNKDMTFTSARTLLSILRLSTALARLRLEDVVEKEDVNEAMRLTEMSKDSLQGDKGHASRTQRPADVIFSTIREMVPEKGARSVKYSEAEQRCVSKGFTPAQFEAALEEYEELNVWLVNQARTKITFV</sequence>
<proteinExistence type="evidence at protein level"/>
<evidence type="ECO:0000250" key="1">
    <source>
        <dbReference type="UniProtKB" id="P33993"/>
    </source>
</evidence>
<evidence type="ECO:0000250" key="2">
    <source>
        <dbReference type="UniProtKB" id="Q61881"/>
    </source>
</evidence>
<evidence type="ECO:0000250" key="3">
    <source>
        <dbReference type="UniProtKB" id="Q91876"/>
    </source>
</evidence>
<evidence type="ECO:0000255" key="4"/>
<evidence type="ECO:0000269" key="5">
    <source>
    </source>
</evidence>
<evidence type="ECO:0000305" key="6"/>
<evidence type="ECO:0000312" key="7">
    <source>
        <dbReference type="EMBL" id="AAC60228.1"/>
    </source>
</evidence>
<evidence type="ECO:0000312" key="8">
    <source>
        <dbReference type="EMBL" id="AAH45072.1"/>
    </source>
</evidence>
<evidence type="ECO:0007829" key="9">
    <source>
        <dbReference type="PDB" id="8Q6O"/>
    </source>
</evidence>